<comment type="subcellular location">
    <subcellularLocation>
        <location evidence="1">Secreted</location>
    </subcellularLocation>
</comment>
<comment type="tissue specificity">
    <text evidence="4">Expressed by the skin glands.</text>
</comment>
<comment type="similarity">
    <text evidence="2">Belongs to the frog skin active peptide (FSAP) family. Brevinin subfamily.</text>
</comment>
<feature type="signal peptide" evidence="2 7">
    <location>
        <begin position="1"/>
        <end position="22"/>
    </location>
</feature>
<feature type="propeptide" id="PRO_0000361719" evidence="4">
    <location>
        <begin position="23"/>
        <end position="51"/>
    </location>
</feature>
<feature type="peptide" id="PRO_0000361720" description="Fallaxidin-5.1">
    <location>
        <begin position="52"/>
        <end position="64"/>
    </location>
</feature>
<feature type="propeptide" id="PRO_0000361721" evidence="4">
    <location>
        <position position="68"/>
    </location>
</feature>
<feature type="region of interest" description="Disordered" evidence="3">
    <location>
        <begin position="24"/>
        <end position="50"/>
    </location>
</feature>
<feature type="compositionally biased region" description="Acidic residues" evidence="3">
    <location>
        <begin position="30"/>
        <end position="42"/>
    </location>
</feature>
<feature type="modified residue" description="Leucine amide" evidence="1">
    <location>
        <position position="64"/>
    </location>
</feature>
<protein>
    <recommendedName>
        <fullName evidence="5 7">Preprofallaxidin-5</fullName>
    </recommendedName>
    <component>
        <recommendedName>
            <fullName>Fallaxidin-5.1</fullName>
        </recommendedName>
    </component>
</protein>
<dbReference type="EMBL" id="EU912531">
    <property type="protein sequence ID" value="ACH53449.1"/>
    <property type="molecule type" value="mRNA"/>
</dbReference>
<dbReference type="GO" id="GO:0005576">
    <property type="term" value="C:extracellular region"/>
    <property type="evidence" value="ECO:0000314"/>
    <property type="project" value="UniProtKB"/>
</dbReference>
<dbReference type="GO" id="GO:0006952">
    <property type="term" value="P:defense response"/>
    <property type="evidence" value="ECO:0007669"/>
    <property type="project" value="UniProtKB-KW"/>
</dbReference>
<dbReference type="InterPro" id="IPR004275">
    <property type="entry name" value="Frog_antimicrobial_propeptide"/>
</dbReference>
<dbReference type="Pfam" id="PF03032">
    <property type="entry name" value="FSAP_sig_propep"/>
    <property type="match status" value="1"/>
</dbReference>
<evidence type="ECO:0000250" key="1">
    <source>
        <dbReference type="UniProtKB" id="P82881"/>
    </source>
</evidence>
<evidence type="ECO:0000255" key="2"/>
<evidence type="ECO:0000256" key="3">
    <source>
        <dbReference type="SAM" id="MobiDB-lite"/>
    </source>
</evidence>
<evidence type="ECO:0000269" key="4">
    <source>
    </source>
</evidence>
<evidence type="ECO:0000303" key="5">
    <source>
    </source>
</evidence>
<evidence type="ECO:0000305" key="6"/>
<evidence type="ECO:0000312" key="7">
    <source>
        <dbReference type="EMBL" id="ACH53449.1"/>
    </source>
</evidence>
<organism>
    <name type="scientific">Litoria fallax</name>
    <name type="common">Eastern dwarf tree frog</name>
    <name type="synonym">Hylomantis fallax</name>
    <dbReference type="NCBI Taxonomy" id="115422"/>
    <lineage>
        <taxon>Eukaryota</taxon>
        <taxon>Metazoa</taxon>
        <taxon>Chordata</taxon>
        <taxon>Craniata</taxon>
        <taxon>Vertebrata</taxon>
        <taxon>Euteleostomi</taxon>
        <taxon>Amphibia</taxon>
        <taxon>Batrachia</taxon>
        <taxon>Anura</taxon>
        <taxon>Neobatrachia</taxon>
        <taxon>Hyloidea</taxon>
        <taxon>Hylidae</taxon>
        <taxon>Pelodryadinae</taxon>
        <taxon>Litoria</taxon>
    </lineage>
</organism>
<keyword id="KW-0027">Amidation</keyword>
<keyword id="KW-0878">Amphibian defense peptide</keyword>
<keyword id="KW-0964">Secreted</keyword>
<keyword id="KW-0732">Signal</keyword>
<accession>B5LUQ6</accession>
<proteinExistence type="evidence at transcript level"/>
<reference evidence="6 7" key="1">
    <citation type="journal article" date="2008" name="Rapid Commun. Mass Spectrom.">
        <title>The fallaxidin peptides from the skin secretion of the eastern dwarf tree frog Litoria fallax. Sequence determination by positive and negative ion electrospray mass spectrometry: antimicrobial activity and cDNA cloning of the fallaxidins.</title>
        <authorList>
            <person name="Jackway R.J."/>
            <person name="Bowie J.H."/>
            <person name="Bilusich D."/>
            <person name="Musgrave I.F."/>
            <person name="Surinya-Johnson K.H."/>
            <person name="Tyler M.J."/>
            <person name="Eichinger P.C.H."/>
        </authorList>
    </citation>
    <scope>NUCLEOTIDE SEQUENCE [MRNA]</scope>
    <scope>TISSUE SPECIFICITY</scope>
    <source>
        <tissue evidence="7">Skin</tissue>
    </source>
</reference>
<name>FALX5_LITFA</name>
<sequence>MASLKKSLFLVLFLGFVSLSICEEEKREDKEDEGENEEAEENHEERSEEKRFLPLLASLVGGLLGKRS</sequence>